<keyword id="KW-0004">4Fe-4S</keyword>
<keyword id="KW-0963">Cytoplasm</keyword>
<keyword id="KW-0408">Iron</keyword>
<keyword id="KW-0411">Iron-sulfur</keyword>
<keyword id="KW-0479">Metal-binding</keyword>
<keyword id="KW-0662">Pyridine nucleotide biosynthesis</keyword>
<keyword id="KW-1185">Reference proteome</keyword>
<keyword id="KW-0808">Transferase</keyword>
<name>NADA_PHOPR</name>
<gene>
    <name evidence="1" type="primary">nadA</name>
    <name type="ordered locus">PBPRA2547</name>
</gene>
<proteinExistence type="inferred from homology"/>
<accession>Q6LP50</accession>
<reference key="1">
    <citation type="journal article" date="2005" name="Science">
        <title>Life at depth: Photobacterium profundum genome sequence and expression analysis.</title>
        <authorList>
            <person name="Vezzi A."/>
            <person name="Campanaro S."/>
            <person name="D'Angelo M."/>
            <person name="Simonato F."/>
            <person name="Vitulo N."/>
            <person name="Lauro F.M."/>
            <person name="Cestaro A."/>
            <person name="Malacrida G."/>
            <person name="Simionati B."/>
            <person name="Cannata N."/>
            <person name="Romualdi C."/>
            <person name="Bartlett D.H."/>
            <person name="Valle G."/>
        </authorList>
    </citation>
    <scope>NUCLEOTIDE SEQUENCE [LARGE SCALE GENOMIC DNA]</scope>
    <source>
        <strain>ATCC BAA-1253 / SS9</strain>
    </source>
</reference>
<feature type="chain" id="PRO_1000024959" description="Quinolinate synthase">
    <location>
        <begin position="1"/>
        <end position="353"/>
    </location>
</feature>
<feature type="binding site" evidence="1">
    <location>
        <position position="47"/>
    </location>
    <ligand>
        <name>iminosuccinate</name>
        <dbReference type="ChEBI" id="CHEBI:77875"/>
    </ligand>
</feature>
<feature type="binding site" evidence="1">
    <location>
        <position position="68"/>
    </location>
    <ligand>
        <name>iminosuccinate</name>
        <dbReference type="ChEBI" id="CHEBI:77875"/>
    </ligand>
</feature>
<feature type="binding site" evidence="1">
    <location>
        <position position="113"/>
    </location>
    <ligand>
        <name>[4Fe-4S] cluster</name>
        <dbReference type="ChEBI" id="CHEBI:49883"/>
    </ligand>
</feature>
<feature type="binding site" evidence="1">
    <location>
        <begin position="139"/>
        <end position="141"/>
    </location>
    <ligand>
        <name>iminosuccinate</name>
        <dbReference type="ChEBI" id="CHEBI:77875"/>
    </ligand>
</feature>
<feature type="binding site" evidence="1">
    <location>
        <position position="156"/>
    </location>
    <ligand>
        <name>iminosuccinate</name>
        <dbReference type="ChEBI" id="CHEBI:77875"/>
    </ligand>
</feature>
<feature type="binding site" evidence="1">
    <location>
        <position position="200"/>
    </location>
    <ligand>
        <name>[4Fe-4S] cluster</name>
        <dbReference type="ChEBI" id="CHEBI:49883"/>
    </ligand>
</feature>
<feature type="binding site" evidence="1">
    <location>
        <begin position="226"/>
        <end position="228"/>
    </location>
    <ligand>
        <name>iminosuccinate</name>
        <dbReference type="ChEBI" id="CHEBI:77875"/>
    </ligand>
</feature>
<feature type="binding site" evidence="1">
    <location>
        <position position="243"/>
    </location>
    <ligand>
        <name>iminosuccinate</name>
        <dbReference type="ChEBI" id="CHEBI:77875"/>
    </ligand>
</feature>
<feature type="binding site" evidence="1">
    <location>
        <position position="297"/>
    </location>
    <ligand>
        <name>[4Fe-4S] cluster</name>
        <dbReference type="ChEBI" id="CHEBI:49883"/>
    </ligand>
</feature>
<evidence type="ECO:0000255" key="1">
    <source>
        <dbReference type="HAMAP-Rule" id="MF_00567"/>
    </source>
</evidence>
<organism>
    <name type="scientific">Photobacterium profundum (strain SS9)</name>
    <dbReference type="NCBI Taxonomy" id="298386"/>
    <lineage>
        <taxon>Bacteria</taxon>
        <taxon>Pseudomonadati</taxon>
        <taxon>Pseudomonadota</taxon>
        <taxon>Gammaproteobacteria</taxon>
        <taxon>Vibrionales</taxon>
        <taxon>Vibrionaceae</taxon>
        <taxon>Photobacterium</taxon>
    </lineage>
</organism>
<protein>
    <recommendedName>
        <fullName evidence="1">Quinolinate synthase</fullName>
        <ecNumber evidence="1">2.5.1.72</ecNumber>
    </recommendedName>
</protein>
<dbReference type="EC" id="2.5.1.72" evidence="1"/>
<dbReference type="EMBL" id="CR378671">
    <property type="protein sequence ID" value="CAG20926.1"/>
    <property type="molecule type" value="Genomic_DNA"/>
</dbReference>
<dbReference type="RefSeq" id="WP_011219209.1">
    <property type="nucleotide sequence ID" value="NC_006370.1"/>
</dbReference>
<dbReference type="SMR" id="Q6LP50"/>
<dbReference type="STRING" id="298386.PBPRA2547"/>
<dbReference type="KEGG" id="ppr:PBPRA2547"/>
<dbReference type="eggNOG" id="COG0379">
    <property type="taxonomic scope" value="Bacteria"/>
</dbReference>
<dbReference type="HOGENOM" id="CLU_047382_1_0_6"/>
<dbReference type="UniPathway" id="UPA00253">
    <property type="reaction ID" value="UER00327"/>
</dbReference>
<dbReference type="Proteomes" id="UP000000593">
    <property type="component" value="Chromosome 1"/>
</dbReference>
<dbReference type="GO" id="GO:0005829">
    <property type="term" value="C:cytosol"/>
    <property type="evidence" value="ECO:0007669"/>
    <property type="project" value="TreeGrafter"/>
</dbReference>
<dbReference type="GO" id="GO:0051539">
    <property type="term" value="F:4 iron, 4 sulfur cluster binding"/>
    <property type="evidence" value="ECO:0007669"/>
    <property type="project" value="UniProtKB-KW"/>
</dbReference>
<dbReference type="GO" id="GO:0046872">
    <property type="term" value="F:metal ion binding"/>
    <property type="evidence" value="ECO:0007669"/>
    <property type="project" value="UniProtKB-KW"/>
</dbReference>
<dbReference type="GO" id="GO:0008987">
    <property type="term" value="F:quinolinate synthetase A activity"/>
    <property type="evidence" value="ECO:0007669"/>
    <property type="project" value="UniProtKB-UniRule"/>
</dbReference>
<dbReference type="GO" id="GO:0034628">
    <property type="term" value="P:'de novo' NAD biosynthetic process from L-aspartate"/>
    <property type="evidence" value="ECO:0007669"/>
    <property type="project" value="TreeGrafter"/>
</dbReference>
<dbReference type="FunFam" id="3.40.50.10800:FF:000003">
    <property type="entry name" value="Quinolinate synthase A"/>
    <property type="match status" value="1"/>
</dbReference>
<dbReference type="Gene3D" id="3.40.50.10800">
    <property type="entry name" value="NadA-like"/>
    <property type="match status" value="3"/>
</dbReference>
<dbReference type="HAMAP" id="MF_00567">
    <property type="entry name" value="NadA_type1"/>
    <property type="match status" value="1"/>
</dbReference>
<dbReference type="InterPro" id="IPR003473">
    <property type="entry name" value="NadA"/>
</dbReference>
<dbReference type="InterPro" id="IPR036094">
    <property type="entry name" value="NadA_sf"/>
</dbReference>
<dbReference type="InterPro" id="IPR023513">
    <property type="entry name" value="Quinolinate_synth_A_type1"/>
</dbReference>
<dbReference type="NCBIfam" id="TIGR00550">
    <property type="entry name" value="nadA"/>
    <property type="match status" value="1"/>
</dbReference>
<dbReference type="NCBIfam" id="NF006877">
    <property type="entry name" value="PRK09375.1-1"/>
    <property type="match status" value="1"/>
</dbReference>
<dbReference type="NCBIfam" id="NF006878">
    <property type="entry name" value="PRK09375.1-2"/>
    <property type="match status" value="1"/>
</dbReference>
<dbReference type="PANTHER" id="PTHR30573:SF0">
    <property type="entry name" value="QUINOLINATE SYNTHASE, CHLOROPLASTIC"/>
    <property type="match status" value="1"/>
</dbReference>
<dbReference type="PANTHER" id="PTHR30573">
    <property type="entry name" value="QUINOLINATE SYNTHETASE A"/>
    <property type="match status" value="1"/>
</dbReference>
<dbReference type="Pfam" id="PF02445">
    <property type="entry name" value="NadA"/>
    <property type="match status" value="1"/>
</dbReference>
<dbReference type="SUPFAM" id="SSF142754">
    <property type="entry name" value="NadA-like"/>
    <property type="match status" value="1"/>
</dbReference>
<comment type="function">
    <text evidence="1">Catalyzes the condensation of iminoaspartate with dihydroxyacetone phosphate to form quinolinate.</text>
</comment>
<comment type="catalytic activity">
    <reaction evidence="1">
        <text>iminosuccinate + dihydroxyacetone phosphate = quinolinate + phosphate + 2 H2O + H(+)</text>
        <dbReference type="Rhea" id="RHEA:25888"/>
        <dbReference type="ChEBI" id="CHEBI:15377"/>
        <dbReference type="ChEBI" id="CHEBI:15378"/>
        <dbReference type="ChEBI" id="CHEBI:29959"/>
        <dbReference type="ChEBI" id="CHEBI:43474"/>
        <dbReference type="ChEBI" id="CHEBI:57642"/>
        <dbReference type="ChEBI" id="CHEBI:77875"/>
        <dbReference type="EC" id="2.5.1.72"/>
    </reaction>
    <physiologicalReaction direction="left-to-right" evidence="1">
        <dbReference type="Rhea" id="RHEA:25889"/>
    </physiologicalReaction>
</comment>
<comment type="cofactor">
    <cofactor evidence="1">
        <name>[4Fe-4S] cluster</name>
        <dbReference type="ChEBI" id="CHEBI:49883"/>
    </cofactor>
    <text evidence="1">Binds 1 [4Fe-4S] cluster per subunit.</text>
</comment>
<comment type="pathway">
    <text evidence="1">Cofactor biosynthesis; NAD(+) biosynthesis; quinolinate from iminoaspartate: step 1/1.</text>
</comment>
<comment type="subcellular location">
    <subcellularLocation>
        <location evidence="1">Cytoplasm</location>
    </subcellularLocation>
</comment>
<comment type="similarity">
    <text evidence="1">Belongs to the quinolinate synthase family. Type 1 subfamily.</text>
</comment>
<sequence>MSLTYDPSETIYPFPQKPVPLSEQEKLTHVEKIKALLKEKDAVLVAHYYTDPEIQALAEETGGFVGDSLEMARFGNQHSAKTLIICGVRFMGESAKILTPEKNVLMPTLEAECSLDLGCPADKFSEFCDAHPDHTVVVYANTSAAVKARADWVVTSSIALEIVEHLDSEGKDIIWGPDRHLGAYIQKNTGAEMLLWQGECVVHDEFSAKALRDMKALYPDAAVLVHPESPASVVALADAVGSTSQLIKAAKELPNTKLIVATDKGIFFKMQQMVPDKELVEAPTAGAGATCRSCAHCPWMAMNGLKAIESALVEGGEKHEIFVDEALRVKSLIPLNRMLNFAAELQLKVKGNA</sequence>